<dbReference type="EMBL" id="D63523">
    <property type="protein sequence ID" value="BAA23575.1"/>
    <property type="molecule type" value="Genomic_DNA"/>
</dbReference>
<dbReference type="EMBL" id="AB000109">
    <property type="protein sequence ID" value="BAA78083.1"/>
    <property type="molecule type" value="Genomic_DNA"/>
</dbReference>
<dbReference type="PIR" id="T43780">
    <property type="entry name" value="T43780"/>
</dbReference>
<dbReference type="RefSeq" id="NP_050101.1">
    <property type="nucleotide sequence ID" value="NC_000895.1"/>
</dbReference>
<dbReference type="SMR" id="O21038"/>
<dbReference type="GeneID" id="2193926"/>
<dbReference type="KEGG" id="ddi:DidioMp34"/>
<dbReference type="dictyBase" id="DDB_G0294058">
    <property type="gene designation" value="mrps13"/>
</dbReference>
<dbReference type="VEuPathDB" id="AmoebaDB:DidioMp34"/>
<dbReference type="InParanoid" id="O21038"/>
<dbReference type="PRO" id="PR:O21038"/>
<dbReference type="Proteomes" id="UP000002195">
    <property type="component" value="Mitochondrion"/>
</dbReference>
<dbReference type="GO" id="GO:0005739">
    <property type="term" value="C:mitochondrion"/>
    <property type="evidence" value="ECO:0007669"/>
    <property type="project" value="UniProtKB-SubCell"/>
</dbReference>
<dbReference type="GO" id="GO:1990904">
    <property type="term" value="C:ribonucleoprotein complex"/>
    <property type="evidence" value="ECO:0007669"/>
    <property type="project" value="UniProtKB-KW"/>
</dbReference>
<dbReference type="GO" id="GO:0005840">
    <property type="term" value="C:ribosome"/>
    <property type="evidence" value="ECO:0007669"/>
    <property type="project" value="UniProtKB-KW"/>
</dbReference>
<dbReference type="GO" id="GO:0019843">
    <property type="term" value="F:rRNA binding"/>
    <property type="evidence" value="ECO:0007669"/>
    <property type="project" value="UniProtKB-KW"/>
</dbReference>
<dbReference type="Gene3D" id="4.10.910.10">
    <property type="entry name" value="30s ribosomal protein s13, domain 2"/>
    <property type="match status" value="1"/>
</dbReference>
<dbReference type="InterPro" id="IPR027437">
    <property type="entry name" value="Rbsml_uS13_C"/>
</dbReference>
<dbReference type="InterPro" id="IPR010979">
    <property type="entry name" value="Ribosomal_uS13-like_H2TH"/>
</dbReference>
<dbReference type="SUPFAM" id="SSF46946">
    <property type="entry name" value="S13-like H2TH domain"/>
    <property type="match status" value="1"/>
</dbReference>
<dbReference type="PROSITE" id="PS50159">
    <property type="entry name" value="RIBOSOMAL_S13_2"/>
    <property type="match status" value="1"/>
</dbReference>
<gene>
    <name type="primary">mrps13</name>
    <name type="synonym">rps13</name>
    <name type="ORF">DDB_G0294058</name>
</gene>
<reference key="1">
    <citation type="journal article" date="1998" name="Curr. Genet.">
        <title>A ribosomal protein gene cluster is encoded in the mitochondrial DNA of Dictyostelium discoideum: UGA termination codons and similarity of gene order to Acanthamoeba castellanii.</title>
        <authorList>
            <person name="Iwamoto M."/>
            <person name="Pi M."/>
            <person name="Kurihara M."/>
            <person name="Morio T."/>
            <person name="Tanaka Y."/>
        </authorList>
    </citation>
    <scope>NUCLEOTIDE SEQUENCE [GENOMIC DNA]</scope>
    <source>
        <strain>AX3</strain>
    </source>
</reference>
<reference key="2">
    <citation type="journal article" date="2000" name="Mol. Gen. Genet.">
        <title>The mitochondrial DNA of Dictyostelium discoideum: complete sequence, gene content and genome organization.</title>
        <authorList>
            <person name="Ogawa S."/>
            <person name="Yoshino R."/>
            <person name="Angata K."/>
            <person name="Iwamoto M."/>
            <person name="Pi M."/>
            <person name="Kuroe K."/>
            <person name="Matsuo K."/>
            <person name="Morio T."/>
            <person name="Urushihara H."/>
            <person name="Yanagisawa K."/>
            <person name="Tanaka Y."/>
        </authorList>
    </citation>
    <scope>NUCLEOTIDE SEQUENCE [LARGE SCALE GENOMIC DNA]</scope>
    <source>
        <strain>AX3</strain>
    </source>
</reference>
<comment type="function">
    <text evidence="1">Located at the top of the head of the small subunit, it contacts several helices of the small subunit rRNA.</text>
</comment>
<comment type="subunit">
    <text>Part of the small ribosomal subunit.</text>
</comment>
<comment type="subcellular location">
    <subcellularLocation>
        <location>Mitochondrion</location>
    </subcellularLocation>
</comment>
<comment type="similarity">
    <text evidence="3">Belongs to the universal ribosomal protein uS13 family.</text>
</comment>
<name>RT13_DICDI</name>
<sequence length="169" mass="19721">MGIVIGKIELNNEKQIIGELKKKIKGVNFHIAQKVIMLSGNVASIKGNKLIQSEEKQIVDILQRFKGLYSHNYGLKEEALAKIRRIENVYRYIRVRQGYPVRGRTKSNANTVKRQRNVSTGVKTKRKKMYLLNGKPTNRKERKIFNKLKKLQEKKNKEQKKSQKCKTKK</sequence>
<protein>
    <recommendedName>
        <fullName evidence="3">Small ribosomal subunit protein uS13m</fullName>
    </recommendedName>
    <alternativeName>
        <fullName>Ribosomal protein S13, mitochondrial</fullName>
    </alternativeName>
</protein>
<feature type="chain" id="PRO_0000312381" description="Small ribosomal subunit protein uS13m">
    <location>
        <begin position="1"/>
        <end position="169"/>
    </location>
</feature>
<feature type="region of interest" description="Disordered" evidence="2">
    <location>
        <begin position="149"/>
        <end position="169"/>
    </location>
</feature>
<feature type="compositionally biased region" description="Basic and acidic residues" evidence="2">
    <location>
        <begin position="150"/>
        <end position="161"/>
    </location>
</feature>
<geneLocation type="mitochondrion"/>
<accession>O21038</accession>
<evidence type="ECO:0000250" key="1"/>
<evidence type="ECO:0000256" key="2">
    <source>
        <dbReference type="SAM" id="MobiDB-lite"/>
    </source>
</evidence>
<evidence type="ECO:0000305" key="3"/>
<keyword id="KW-0496">Mitochondrion</keyword>
<keyword id="KW-1185">Reference proteome</keyword>
<keyword id="KW-0687">Ribonucleoprotein</keyword>
<keyword id="KW-0689">Ribosomal protein</keyword>
<keyword id="KW-0694">RNA-binding</keyword>
<keyword id="KW-0699">rRNA-binding</keyword>
<proteinExistence type="inferred from homology"/>
<organism>
    <name type="scientific">Dictyostelium discoideum</name>
    <name type="common">Social amoeba</name>
    <dbReference type="NCBI Taxonomy" id="44689"/>
    <lineage>
        <taxon>Eukaryota</taxon>
        <taxon>Amoebozoa</taxon>
        <taxon>Evosea</taxon>
        <taxon>Eumycetozoa</taxon>
        <taxon>Dictyostelia</taxon>
        <taxon>Dictyosteliales</taxon>
        <taxon>Dictyosteliaceae</taxon>
        <taxon>Dictyostelium</taxon>
    </lineage>
</organism>